<sequence>MMKFMCLFVCAIAAVSASDYGNVGYGRVPVGGLAYQVQPALTVSSIVPVGGYGGGYGGGRGYGRGYGRSVEVPVAAVWTPNSRYGVAPVDRQALGLAKLSLAAPGAGGPLVLNEPRRIIKVSGYGPQRGYKQPLGYGSIEQAQGASAAAASSSVAGQNKGYQNGGY</sequence>
<evidence type="ECO:0000250" key="1"/>
<evidence type="ECO:0000255" key="2"/>
<evidence type="ECO:0000305" key="3"/>
<reference key="1">
    <citation type="journal article" date="1990" name="J. Mol. Biol.">
        <title>Evolution of the autosomal chorion cluster in Drosophila. III. Comparison of the s18 gene in evolutionarily distant species and heterospecific control of chorion gene amplification.</title>
        <authorList>
            <person name="Swimmer C."/>
            <person name="Fenerjian M.G."/>
            <person name="Martinez-Cruzado J.C."/>
            <person name="Kafatos F.C."/>
        </authorList>
    </citation>
    <scope>NUCLEOTIDE SEQUENCE [GENOMIC DNA]</scope>
</reference>
<reference key="2">
    <citation type="journal article" date="2007" name="Nature">
        <title>Evolution of genes and genomes on the Drosophila phylogeny.</title>
        <authorList>
            <consortium name="Drosophila 12 genomes consortium"/>
        </authorList>
    </citation>
    <scope>NUCLEOTIDE SEQUENCE [LARGE SCALE GENOMIC DNA]</scope>
    <source>
        <strain>Tucson 15287-2541.00</strain>
    </source>
</reference>
<accession>P24513</accession>
<accession>B4IWK8</accession>
<gene>
    <name type="primary">Cp18</name>
    <name type="synonym">S18</name>
    <name type="ORF">GH15323</name>
</gene>
<comment type="function">
    <text evidence="1">Chorion membrane (egg shell) protein; plays a role in protecting the egg from the environment.</text>
</comment>
<comment type="subcellular location">
    <subcellularLocation>
        <location evidence="1">Secreted</location>
    </subcellularLocation>
</comment>
<comment type="similarity">
    <text evidence="3">Belongs to the chorion protein S15/S18 family.</text>
</comment>
<dbReference type="EMBL" id="X53422">
    <property type="protein sequence ID" value="CAA37504.1"/>
    <property type="molecule type" value="Genomic_DNA"/>
</dbReference>
<dbReference type="EMBL" id="CH916366">
    <property type="protein sequence ID" value="EDV96234.1"/>
    <property type="molecule type" value="Genomic_DNA"/>
</dbReference>
<dbReference type="PIR" id="S13219">
    <property type="entry name" value="S13219"/>
</dbReference>
<dbReference type="STRING" id="7222.P24513"/>
<dbReference type="EnsemblMetazoa" id="FBtr0150737">
    <property type="protein sequence ID" value="FBpp0149229"/>
    <property type="gene ID" value="FBgn0012319"/>
</dbReference>
<dbReference type="EnsemblMetazoa" id="XM_001983850.2">
    <property type="protein sequence ID" value="XP_001983886.1"/>
    <property type="gene ID" value="LOC6557096"/>
</dbReference>
<dbReference type="GeneID" id="6557096"/>
<dbReference type="KEGG" id="dgr:6557096"/>
<dbReference type="CTD" id="38998"/>
<dbReference type="eggNOG" id="ENOG502TBAZ">
    <property type="taxonomic scope" value="Eukaryota"/>
</dbReference>
<dbReference type="HOGENOM" id="CLU_1541752_0_0_1"/>
<dbReference type="InParanoid" id="P24513"/>
<dbReference type="OMA" id="FMCIFVC"/>
<dbReference type="OrthoDB" id="7862390at2759"/>
<dbReference type="PhylomeDB" id="P24513"/>
<dbReference type="Proteomes" id="UP000001070">
    <property type="component" value="Unassembled WGS sequence"/>
</dbReference>
<dbReference type="GO" id="GO:0042600">
    <property type="term" value="C:egg chorion"/>
    <property type="evidence" value="ECO:0007669"/>
    <property type="project" value="InterPro"/>
</dbReference>
<dbReference type="GO" id="GO:0005576">
    <property type="term" value="C:extracellular region"/>
    <property type="evidence" value="ECO:0007669"/>
    <property type="project" value="UniProtKB-SubCell"/>
</dbReference>
<dbReference type="GO" id="GO:0007304">
    <property type="term" value="P:chorion-containing eggshell formation"/>
    <property type="evidence" value="ECO:0007669"/>
    <property type="project" value="EnsemblMetazoa"/>
</dbReference>
<dbReference type="InterPro" id="IPR005649">
    <property type="entry name" value="Chorion_2"/>
</dbReference>
<dbReference type="Pfam" id="PF03964">
    <property type="entry name" value="Chorion_2"/>
    <property type="match status" value="1"/>
</dbReference>
<organism>
    <name type="scientific">Drosophila grimshawi</name>
    <name type="common">Hawaiian fruit fly</name>
    <name type="synonym">Idiomyia grimshawi</name>
    <dbReference type="NCBI Taxonomy" id="7222"/>
    <lineage>
        <taxon>Eukaryota</taxon>
        <taxon>Metazoa</taxon>
        <taxon>Ecdysozoa</taxon>
        <taxon>Arthropoda</taxon>
        <taxon>Hexapoda</taxon>
        <taxon>Insecta</taxon>
        <taxon>Pterygota</taxon>
        <taxon>Neoptera</taxon>
        <taxon>Endopterygota</taxon>
        <taxon>Diptera</taxon>
        <taxon>Brachycera</taxon>
        <taxon>Muscomorpha</taxon>
        <taxon>Ephydroidea</taxon>
        <taxon>Drosophilidae</taxon>
        <taxon>Drosophila</taxon>
        <taxon>Hawaiian Drosophila</taxon>
    </lineage>
</organism>
<keyword id="KW-1185">Reference proteome</keyword>
<keyword id="KW-0964">Secreted</keyword>
<keyword id="KW-0732">Signal</keyword>
<proteinExistence type="inferred from homology"/>
<feature type="signal peptide" evidence="2">
    <location>
        <begin position="1"/>
        <end position="17"/>
    </location>
</feature>
<feature type="chain" id="PRO_0000089620" description="Chorion protein S18">
    <location>
        <begin position="18"/>
        <end position="166"/>
    </location>
</feature>
<protein>
    <recommendedName>
        <fullName>Chorion protein S18</fullName>
    </recommendedName>
</protein>
<name>CH18_DROGR</name>